<comment type="function">
    <text evidence="1">DNA-dependent RNA polymerase catalyzes the transcription of DNA into RNA using the four ribonucleoside triphosphates as substrates.</text>
</comment>
<comment type="catalytic activity">
    <reaction evidence="1">
        <text>RNA(n) + a ribonucleoside 5'-triphosphate = RNA(n+1) + diphosphate</text>
        <dbReference type="Rhea" id="RHEA:21248"/>
        <dbReference type="Rhea" id="RHEA-COMP:14527"/>
        <dbReference type="Rhea" id="RHEA-COMP:17342"/>
        <dbReference type="ChEBI" id="CHEBI:33019"/>
        <dbReference type="ChEBI" id="CHEBI:61557"/>
        <dbReference type="ChEBI" id="CHEBI:140395"/>
        <dbReference type="EC" id="2.7.7.6"/>
    </reaction>
</comment>
<comment type="cofactor">
    <cofactor evidence="1">
        <name>Zn(2+)</name>
        <dbReference type="ChEBI" id="CHEBI:29105"/>
    </cofactor>
    <text evidence="1">Binds 1 Zn(2+) ion per subunit.</text>
</comment>
<comment type="subunit">
    <text evidence="1">In plastids the minimal PEP RNA polymerase catalytic core is composed of four subunits: alpha, beta, beta', and beta''. When a (nuclear-encoded) sigma factor is associated with the core the holoenzyme is formed, which can initiate transcription.</text>
</comment>
<comment type="subcellular location">
    <subcellularLocation>
        <location evidence="1">Plastid</location>
        <location evidence="1">Chloroplast</location>
    </subcellularLocation>
</comment>
<comment type="miscellaneous">
    <text>The N-terminal and C-terminal regions are transcribed; however the middle region cannot be amplified by RT-PCR. Thus it is not clear which parts of this protein are expressed.</text>
</comment>
<comment type="similarity">
    <text evidence="1">Belongs to the RNA polymerase beta' chain family. RpoC2 subfamily.</text>
</comment>
<comment type="sequence caution" evidence="3">
    <conflict type="miscellaneous discrepancy" ref="3"/>
    <text>Sequencing errors.</text>
</comment>
<evidence type="ECO:0000255" key="1">
    <source>
        <dbReference type="HAMAP-Rule" id="MF_01324"/>
    </source>
</evidence>
<evidence type="ECO:0000256" key="2">
    <source>
        <dbReference type="SAM" id="MobiDB-lite"/>
    </source>
</evidence>
<evidence type="ECO:0000305" key="3"/>
<organism>
    <name type="scientific">Chlamydomonas reinhardtii</name>
    <name type="common">Chlamydomonas smithii</name>
    <dbReference type="NCBI Taxonomy" id="3055"/>
    <lineage>
        <taxon>Eukaryota</taxon>
        <taxon>Viridiplantae</taxon>
        <taxon>Chlorophyta</taxon>
        <taxon>core chlorophytes</taxon>
        <taxon>Chlorophyceae</taxon>
        <taxon>CS clade</taxon>
        <taxon>Chlamydomonadales</taxon>
        <taxon>Chlamydomonadaceae</taxon>
        <taxon>Chlamydomonas</taxon>
    </lineage>
</organism>
<name>RPOC2_CHLRE</name>
<geneLocation type="chloroplast"/>
<sequence>MNIFFQRKLVKYFGNIKKKKHYLTVSEECNHYVFVKKTYVSSVFLKSLNKVNKTCNTNSGILYNQYSLGYINMHKQLPSLIRNKSKTIGNYGVAHPSRLVKCLVTKNATAPFFNFTFDKGRLKNLVSWTLENYGQYKTVELLEQLKKTGFEYATKAGISLGLDDLKIPPKKKILLLEAEQLTKLTIHQYQRGDITAVERFQRLIDTWHRTSEQLKQEVINYFEETDILNPVYMMAFSGARGNISQVRQLVGMRGLMSDPQGQIIDFPIQSNFREGLTLTEYIISSYGARKGIVDTALRTANAGYLTRRLVDVAQHVIISHYDCGTHKGIFLTDMKEGNKTIVSAQSRIIGRVLARDIYKPNSTITIAKRNQEISTDVAFEIGKVTNRIFVRSALTCNTTKLLCQLCYGWSLAQGNLVSVGEAVGVIAAQSIGEPGTQLTMRTFHTGGVFSGDVSDEIRAPYNGFVYYDNKIPGILIRTLDGKILFLTKSEGTLIFTADPNFNKPQALTDSFLNSGHGEKEKYEIKKYKIPAYTLLFIRNGESVLQKQVLAQITMISTKPNMRDTAELVIKAELEGLFYAKNLQVQKKILGPKPKFIGEGKQNVLLDPKAMEIIVKARGWNFAWVLSGKRYEFPLLLKSFASSGDLITPNTIMAKHNLQLSSPFLNVGTALQVGNSTDIPKLPLLGATSKFRAMSGVLTSSIVRRYPTKINSSSRPKVNQFGKSNLFYTQVLQNKVNALNGEVDSYSETAKLPYWKNLNLKFVQKLNLSKFFKQYNLKNKTKTKLAFYSLVQANALQASKLDSFKANTFQSKQLGRPIFIYRHCLLTKESNKKTVKLIHNIQLQQSVLFLKIKKIKFYKMGYFQLVNSNKTAFLVSLSHNKNRLTLYHNKFNYNNSYNDIIVLPTSLTQDISSKKQIALKRFKPAYNLFQWFYPSLIKPSSKEAQNLTVQQVEFFNAREQMHFNSRYSKTDFVQLLQNPFKLDFNKALHRPLCISESYKEIPTGEVSISPQNSVNLPMNTFFNTDGVPDKKPNYTNMYAFWLKQQVLKSYKKRYKKYKLTSILKSHLSDKIYLPASVELQHQSQQNNLLSLTKEFKALNSSKYLKNNQLQSRPLLYKQEKLLKTLVLKKWFKSNLLYVNSAISKEENMDGSSTQMSAHSLPKRQRKGAKVSKINRFLKIDNYIKQLTYFKTSKIMRIKHSFNSLRVDFKFTSSKLVCPKRKRNLQIVCTLRGEEQTSVRESSVTHVNNLICSSKYKRSIRLQNDSHLFTTTKKAKVPFTGYSDSHQAGKVLQSSQISSTKPKTQSSFTFFEYFKLKLAQSGTKAILKHFKSLKAVNISKVSMDQSRNKGFNNWGKSSSECLNTSLGDKQALYFKTKTEANLQLLTLVLENFYRKKQFANLLAKNLTILNKNLKLKKNHVHFLLYYYNKLSVQKPNAIFLLTHMLAKANKIQISYSYVVPTSPKSKLNLDRGNLTTTNQKNVASLGGYQPRSAGTKYYSEGIRNRTRKNNKSSMTKITKIFNQLKLDTQFVIILLSPHKLLHHSHQLPQNTLGIYDKFNSNFEMAKVTLLTHPLWFNQFQMKSIKEVGNKFINTRNNSLLENYVILLLSNNYVFNFLSIKSEQINLPEEQESNLSLQEYKSPANCQEKALPSDNKKIIFDLKKLQHIVLTEQYKNNLRWVKNKKPRFLPKDIDINTLEVNLDRIKPKNKLSNLNPTQQLQLSNSLLEFVKTIKINPTDLAKVYSGSANTVMSIENCQPSLEVSNTFFLKTQKLLKLINKTKHSIALNQTKFINTSLLKGHLVAYARPVFIITNKAEPFIAKQKKDLLLLPKNATINVLIKPQQEKNSLNKAIFPLGGNAANNHSIFVSPNTNKLANPNVSYLKKHIYFNQMPFFDSPFRNASYLFSYTENSIKPLTKVDFMHSFAQKNHKLLPESEREKRLQFKALHIPKQPCLNICFKSNSNLIFNSKTTNSLVIRKTTTNYKYNIDLSEGVDFKKLKTNMFSARKCNNFKLDTALESKLFKGRPTLLNYKNVVTQTNYFSPFEGELLATKTYKNYLDLNPYQSLKVGLMQLNTSSALATLVPKTKRAGNKSSKQKIKLNQGELSTELGSTIPQSGKHKTKTEKMRMAMFKYYLKTINSQKIIGNKGWSRFNLILTKKDFITLKYNNTLYPNFTIFSEIQKHWQPRIQMTKPIRPISYDEVCLNYLFSEEITNQVKLQTLAKLNKEIHFNKSYHFNLKNRWLKQKLVINASTSKSTSSLLTNIHMDQGEDKKTSVGVSLKLPAIYLCEEEGLHTNLFIHKAQRLLYKIKIILSEKALNVEHYSWNKNSSLQKTFGYQNGIIQAKSLLHTLPTNLNYNLKWINYKQKNIFTTNKVGFFFLKGNTFFNTSQKLFNKKITKQTTFLNATIYNFGRNNKNNLISYNNSNFLENTHFVDLSLCLELQKIYLNKNYLNLKPILDKTIHCQKPTKVLFKKSGFSKKQHYYLEFLNTKNHRRLIGLKEFNDYHMSYSKSQTKEMSNFIDSYYFVKPINMDCAHYIKHELVLYNDLITHFASLNLYISREHGLKSLSAFFINILKIFITSNQSQISLAPIGIDKYTNIYIPEGEGEKDMTKNVFQVIKKSGQLIQMNKEKMTLRLGQPLVISPRSTIHATHGDFIRYKTPVVTLTYQQLKTGDIVQGIPKIEQLFEARTTKRGRLFRDNVTNLLTGLFLKYFIKSTYLLRKTMIGFSKKRWKKSIKYTLPVNKQPNMPRVNHTLNTTVGTELGRQSKTKVDKNKHSIAINKNLNYSNFINNKQNQTIILALALQWAVKQSFYKIQQIIVDGILRVYRSQGVSIADKHVEIVVKQMTSKVRIINSNASKMSEYMFSLDTIKAGEMPETDLPEEEVSLQQNKAVSKQNVVAQTGKKRKKRLRKSKLSERDVITTKRTEGIDSSKIPSSNIPEGKVTQNNKRKSTRKNVSLADRELKTRNTLSNTTKPIQISQVFEHKVLNQLLSNNLDGPTGLFPGEIVDIDFVENINTFLLKTASVDRASRETLSTDPLNPNNQVAFAIEPIKYEPIVLGITRASLEVESFLSAASFQQTTRVLSQAALYKKKDFLKGLKENIIIGNLIPAGTGFLSSLNI</sequence>
<feature type="chain" id="PRO_0000067919" description="DNA-directed RNA polymerase subunit beta''">
    <location>
        <begin position="1"/>
        <end position="3120"/>
    </location>
</feature>
<feature type="region of interest" description="Insert-1">
    <location>
        <begin position="595"/>
        <end position="1130"/>
    </location>
</feature>
<feature type="region of interest" description="Insert-2">
    <location>
        <begin position="1796"/>
        <end position="2346"/>
    </location>
</feature>
<feature type="region of interest" description="Insert-3">
    <location>
        <begin position="2422"/>
        <end position="2610"/>
    </location>
</feature>
<feature type="region of interest" description="Insert-4">
    <location>
        <begin position="2726"/>
        <end position="2801"/>
    </location>
</feature>
<feature type="region of interest" description="Insert-5">
    <location>
        <begin position="2856"/>
        <end position="2996"/>
    </location>
</feature>
<feature type="region of interest" description="Disordered" evidence="2">
    <location>
        <begin position="2926"/>
        <end position="2956"/>
    </location>
</feature>
<feature type="compositionally biased region" description="Polar residues" evidence="2">
    <location>
        <begin position="2932"/>
        <end position="2946"/>
    </location>
</feature>
<feature type="binding site" evidence="1">
    <location>
        <position position="323"/>
    </location>
    <ligand>
        <name>Zn(2+)</name>
        <dbReference type="ChEBI" id="CHEBI:29105"/>
    </ligand>
</feature>
<feature type="binding site" evidence="1">
    <location>
        <position position="396"/>
    </location>
    <ligand>
        <name>Zn(2+)</name>
        <dbReference type="ChEBI" id="CHEBI:29105"/>
    </ligand>
</feature>
<feature type="binding site" evidence="1">
    <location>
        <position position="403"/>
    </location>
    <ligand>
        <name>Zn(2+)</name>
        <dbReference type="ChEBI" id="CHEBI:29105"/>
    </ligand>
</feature>
<feature type="binding site" evidence="1">
    <location>
        <position position="406"/>
    </location>
    <ligand>
        <name>Zn(2+)</name>
        <dbReference type="ChEBI" id="CHEBI:29105"/>
    </ligand>
</feature>
<feature type="sequence variant" description="In strain: CC-503.">
    <original>NA</original>
    <variation>KP</variation>
    <location>
        <begin position="793"/>
        <end position="794"/>
    </location>
</feature>
<feature type="sequence variant" description="In strain: CC-503.">
    <original>R</original>
    <variation>A</variation>
    <location>
        <position position="1489"/>
    </location>
</feature>
<keyword id="KW-0150">Chloroplast</keyword>
<keyword id="KW-0240">DNA-directed RNA polymerase</keyword>
<keyword id="KW-0479">Metal-binding</keyword>
<keyword id="KW-0548">Nucleotidyltransferase</keyword>
<keyword id="KW-0934">Plastid</keyword>
<keyword id="KW-1185">Reference proteome</keyword>
<keyword id="KW-0804">Transcription</keyword>
<keyword id="KW-0808">Transferase</keyword>
<keyword id="KW-0862">Zinc</keyword>
<reference key="1">
    <citation type="journal article" date="2009" name="BMC Evol. Biol.">
        <title>Nucleotide diversity of the Chlamydomonas reinhardtii plastid genome: addressing the mutational-hazard hypothesis.</title>
        <authorList>
            <person name="Smith D.R."/>
            <person name="Lee R.W."/>
        </authorList>
    </citation>
    <scope>NUCLEOTIDE SEQUENCE [LARGE SCALE GENOMIC DNA]</scope>
    <source>
        <strain>CC-503</strain>
    </source>
</reference>
<reference key="2">
    <citation type="journal article" date="1992" name="Curr. Genet.">
        <title>Chloroplast RNA polymerase genes of Chlamydomonas reinhardtii exhibit an unusual structure and arrangement.</title>
        <authorList>
            <person name="Fong S.E."/>
            <person name="Surzycki S.J."/>
        </authorList>
    </citation>
    <scope>NUCLEOTIDE SEQUENCE [GENOMIC DNA] OF 1-1092 AND 1093-3120</scope>
</reference>
<reference key="3">
    <citation type="submission" date="1996-05" db="EMBL/GenBank/DDBJ databases">
        <title>The chloroplast rpoC2 gene of Chlamydomonas reinhardtii.</title>
        <authorList>
            <person name="Nuotio S."/>
            <person name="Purton S."/>
        </authorList>
    </citation>
    <scope>NUCLEOTIDE SEQUENCE [GENOMIC DNA] OF 1093-3120</scope>
</reference>
<reference key="4">
    <citation type="journal article" date="2002" name="Plant Cell">
        <title>The Chlamydomonas reinhardtii plastid chromosome: islands of genes in a sea of repeats.</title>
        <authorList>
            <person name="Maul J.E."/>
            <person name="Lilly J.W."/>
            <person name="Cui L."/>
            <person name="dePamphilis C.W."/>
            <person name="Miller W."/>
            <person name="Harris E.H."/>
            <person name="Stern D.B."/>
        </authorList>
    </citation>
    <scope>IDENTIFICATION</scope>
    <scope>COMPLETE PLASTID GENOME</scope>
</reference>
<proteinExistence type="evidence at transcript level"/>
<gene>
    <name evidence="1" type="primary">rpoC2</name>
</gene>
<accession>Q7PCJ6</accession>
<accession>B7U1I7</accession>
<accession>Q32064</accession>
<accession>Q8HTL4</accession>
<dbReference type="EC" id="2.7.7.6" evidence="1"/>
<dbReference type="EMBL" id="FJ423446">
    <property type="protein sequence ID" value="ACJ50134.1"/>
    <property type="molecule type" value="Genomic_DNA"/>
</dbReference>
<dbReference type="EMBL" id="AY162826">
    <property type="protein sequence ID" value="AAN60106.1"/>
    <property type="molecule type" value="Genomic_DNA"/>
</dbReference>
<dbReference type="EMBL" id="U57326">
    <property type="protein sequence ID" value="AAB01997.1"/>
    <property type="molecule type" value="Genomic_DNA"/>
</dbReference>
<dbReference type="EMBL" id="BK000554">
    <property type="protein sequence ID" value="DAA00948.1"/>
    <property type="molecule type" value="Genomic_DNA"/>
</dbReference>
<dbReference type="PIR" id="S26875">
    <property type="entry name" value="S26875"/>
</dbReference>
<dbReference type="PIR" id="T08025">
    <property type="entry name" value="T08025"/>
</dbReference>
<dbReference type="RefSeq" id="NP_958403.1">
    <property type="nucleotide sequence ID" value="NC_005353.1"/>
</dbReference>
<dbReference type="SMR" id="Q7PCJ6"/>
<dbReference type="FunCoup" id="Q7PCJ6">
    <property type="interactions" value="43"/>
</dbReference>
<dbReference type="STRING" id="3055.Q7PCJ6"/>
<dbReference type="PaxDb" id="3055-DAA00948"/>
<dbReference type="GeneID" id="2716998"/>
<dbReference type="KEGG" id="cre:ChreCp047"/>
<dbReference type="eggNOG" id="ENOG502QPYA">
    <property type="taxonomic scope" value="Eukaryota"/>
</dbReference>
<dbReference type="HOGENOM" id="CLU_225737_0_0_1"/>
<dbReference type="InParanoid" id="Q7PCJ6"/>
<dbReference type="Proteomes" id="UP000006906">
    <property type="component" value="Chloroplast"/>
</dbReference>
<dbReference type="GO" id="GO:0009507">
    <property type="term" value="C:chloroplast"/>
    <property type="evidence" value="ECO:0007669"/>
    <property type="project" value="UniProtKB-SubCell"/>
</dbReference>
<dbReference type="GO" id="GO:0000428">
    <property type="term" value="C:DNA-directed RNA polymerase complex"/>
    <property type="evidence" value="ECO:0007669"/>
    <property type="project" value="UniProtKB-KW"/>
</dbReference>
<dbReference type="GO" id="GO:0005739">
    <property type="term" value="C:mitochondrion"/>
    <property type="evidence" value="ECO:0007669"/>
    <property type="project" value="GOC"/>
</dbReference>
<dbReference type="GO" id="GO:0003677">
    <property type="term" value="F:DNA binding"/>
    <property type="evidence" value="ECO:0007669"/>
    <property type="project" value="UniProtKB-UniRule"/>
</dbReference>
<dbReference type="GO" id="GO:0003899">
    <property type="term" value="F:DNA-directed RNA polymerase activity"/>
    <property type="evidence" value="ECO:0007669"/>
    <property type="project" value="UniProtKB-UniRule"/>
</dbReference>
<dbReference type="GO" id="GO:0008270">
    <property type="term" value="F:zinc ion binding"/>
    <property type="evidence" value="ECO:0007669"/>
    <property type="project" value="UniProtKB-UniRule"/>
</dbReference>
<dbReference type="GO" id="GO:0006351">
    <property type="term" value="P:DNA-templated transcription"/>
    <property type="evidence" value="ECO:0007669"/>
    <property type="project" value="UniProtKB-UniRule"/>
</dbReference>
<dbReference type="CDD" id="cd02655">
    <property type="entry name" value="RNAP_beta'_C"/>
    <property type="match status" value="1"/>
</dbReference>
<dbReference type="Gene3D" id="1.10.132.30">
    <property type="match status" value="1"/>
</dbReference>
<dbReference type="Gene3D" id="1.10.150.390">
    <property type="match status" value="1"/>
</dbReference>
<dbReference type="Gene3D" id="1.10.1790.20">
    <property type="match status" value="1"/>
</dbReference>
<dbReference type="Gene3D" id="1.10.274.100">
    <property type="entry name" value="RNA polymerase Rpb1, domain 3"/>
    <property type="match status" value="1"/>
</dbReference>
<dbReference type="HAMAP" id="MF_01324">
    <property type="entry name" value="RNApol_bact_RpoC2"/>
    <property type="match status" value="1"/>
</dbReference>
<dbReference type="InterPro" id="IPR012756">
    <property type="entry name" value="DNA-dir_RpoC2_beta_pp"/>
</dbReference>
<dbReference type="InterPro" id="IPR045867">
    <property type="entry name" value="DNA-dir_RpoC_beta_prime"/>
</dbReference>
<dbReference type="InterPro" id="IPR007066">
    <property type="entry name" value="RNA_pol_Rpb1_3"/>
</dbReference>
<dbReference type="InterPro" id="IPR042102">
    <property type="entry name" value="RNA_pol_Rpb1_3_sf"/>
</dbReference>
<dbReference type="InterPro" id="IPR007083">
    <property type="entry name" value="RNA_pol_Rpb1_4"/>
</dbReference>
<dbReference type="InterPro" id="IPR007081">
    <property type="entry name" value="RNA_pol_Rpb1_5"/>
</dbReference>
<dbReference type="InterPro" id="IPR038120">
    <property type="entry name" value="Rpb1_funnel_sf"/>
</dbReference>
<dbReference type="NCBIfam" id="TIGR02388">
    <property type="entry name" value="rpoC2_cyan"/>
    <property type="match status" value="1"/>
</dbReference>
<dbReference type="PANTHER" id="PTHR19376">
    <property type="entry name" value="DNA-DIRECTED RNA POLYMERASE"/>
    <property type="match status" value="1"/>
</dbReference>
<dbReference type="PANTHER" id="PTHR19376:SF68">
    <property type="entry name" value="DNA-DIRECTED RNA POLYMERASE SUBUNIT BETA"/>
    <property type="match status" value="1"/>
</dbReference>
<dbReference type="Pfam" id="PF04983">
    <property type="entry name" value="RNA_pol_Rpb1_3"/>
    <property type="match status" value="1"/>
</dbReference>
<dbReference type="Pfam" id="PF05000">
    <property type="entry name" value="RNA_pol_Rpb1_4"/>
    <property type="match status" value="1"/>
</dbReference>
<dbReference type="Pfam" id="PF04998">
    <property type="entry name" value="RNA_pol_Rpb1_5"/>
    <property type="match status" value="1"/>
</dbReference>
<dbReference type="SUPFAM" id="SSF64484">
    <property type="entry name" value="beta and beta-prime subunits of DNA dependent RNA-polymerase"/>
    <property type="match status" value="2"/>
</dbReference>
<protein>
    <recommendedName>
        <fullName evidence="1">DNA-directed RNA polymerase subunit beta''</fullName>
        <ecNumber evidence="1">2.7.7.6</ecNumber>
    </recommendedName>
    <alternativeName>
        <fullName evidence="1">PEP</fullName>
    </alternativeName>
    <alternativeName>
        <fullName evidence="1">Plastid-encoded RNA polymerase subunit beta''</fullName>
        <shortName evidence="1">RNA polymerase subunit beta''</shortName>
    </alternativeName>
</protein>